<proteinExistence type="inferred from homology"/>
<name>TRHO_BACC3</name>
<feature type="chain" id="PRO_1000135461" description="tRNA uridine(34) hydroxylase">
    <location>
        <begin position="1"/>
        <end position="319"/>
    </location>
</feature>
<feature type="domain" description="Rhodanese" evidence="1">
    <location>
        <begin position="127"/>
        <end position="221"/>
    </location>
</feature>
<feature type="active site" description="Cysteine persulfide intermediate" evidence="1">
    <location>
        <position position="181"/>
    </location>
</feature>
<gene>
    <name evidence="1" type="primary">trhO</name>
    <name type="ordered locus">BCA_1948</name>
</gene>
<evidence type="ECO:0000255" key="1">
    <source>
        <dbReference type="HAMAP-Rule" id="MF_00469"/>
    </source>
</evidence>
<sequence>MATTKPYRVLLYYMYTTIENPEEFAAEHLAFCNSLELKGRILVAKEGINGTCSGTVEQTEKYMEAMNNDPRFDGIVFKIDEADGHAFKKMHVRPRPELVTLRLEDDINPHEITGKYLEPKDFYEAMKQEDTVIIDARNDYEFDLGHFKGAIKPDIESFRELPDWIRENKEVLEGKKILTYCTGGIRCEKFSGWLVREGYEDVSQLHGGIVTYGKDPEVQGELWDGQCYVFDERIAVPVNQKEHVIVGKDHFTGEPCERYVNCANPECNKKILCSEENEAKYLRACSHECRVSPRNRYVIQHELTEEQVAAALEKIEAGK</sequence>
<protein>
    <recommendedName>
        <fullName evidence="1">tRNA uridine(34) hydroxylase</fullName>
        <ecNumber evidence="1">1.14.-.-</ecNumber>
    </recommendedName>
    <alternativeName>
        <fullName evidence="1">tRNA hydroxylation protein O</fullName>
    </alternativeName>
</protein>
<keyword id="KW-0560">Oxidoreductase</keyword>
<keyword id="KW-0819">tRNA processing</keyword>
<dbReference type="EC" id="1.14.-.-" evidence="1"/>
<dbReference type="EMBL" id="CP001407">
    <property type="protein sequence ID" value="ACO30754.1"/>
    <property type="molecule type" value="Genomic_DNA"/>
</dbReference>
<dbReference type="RefSeq" id="WP_000246212.1">
    <property type="nucleotide sequence ID" value="NZ_CP009318.1"/>
</dbReference>
<dbReference type="SMR" id="C1EQF9"/>
<dbReference type="KEGG" id="bcx:BCA_1948"/>
<dbReference type="PATRIC" id="fig|572264.18.peg.1896"/>
<dbReference type="Proteomes" id="UP000002210">
    <property type="component" value="Chromosome"/>
</dbReference>
<dbReference type="GO" id="GO:0016705">
    <property type="term" value="F:oxidoreductase activity, acting on paired donors, with incorporation or reduction of molecular oxygen"/>
    <property type="evidence" value="ECO:0007669"/>
    <property type="project" value="UniProtKB-UniRule"/>
</dbReference>
<dbReference type="GO" id="GO:0006400">
    <property type="term" value="P:tRNA modification"/>
    <property type="evidence" value="ECO:0007669"/>
    <property type="project" value="UniProtKB-UniRule"/>
</dbReference>
<dbReference type="CDD" id="cd01518">
    <property type="entry name" value="RHOD_YceA"/>
    <property type="match status" value="1"/>
</dbReference>
<dbReference type="Gene3D" id="3.30.70.100">
    <property type="match status" value="1"/>
</dbReference>
<dbReference type="Gene3D" id="3.40.250.10">
    <property type="entry name" value="Rhodanese-like domain"/>
    <property type="match status" value="1"/>
</dbReference>
<dbReference type="HAMAP" id="MF_00469">
    <property type="entry name" value="TrhO"/>
    <property type="match status" value="1"/>
</dbReference>
<dbReference type="InterPro" id="IPR001763">
    <property type="entry name" value="Rhodanese-like_dom"/>
</dbReference>
<dbReference type="InterPro" id="IPR036873">
    <property type="entry name" value="Rhodanese-like_dom_sf"/>
</dbReference>
<dbReference type="InterPro" id="IPR022111">
    <property type="entry name" value="Rhodanese_C"/>
</dbReference>
<dbReference type="InterPro" id="IPR020936">
    <property type="entry name" value="TrhO"/>
</dbReference>
<dbReference type="InterPro" id="IPR040503">
    <property type="entry name" value="TRHO_N"/>
</dbReference>
<dbReference type="NCBIfam" id="NF001135">
    <property type="entry name" value="PRK00142.1-3"/>
    <property type="match status" value="1"/>
</dbReference>
<dbReference type="PANTHER" id="PTHR43268:SF3">
    <property type="entry name" value="RHODANESE-LIKE DOMAIN-CONTAINING PROTEIN 7-RELATED"/>
    <property type="match status" value="1"/>
</dbReference>
<dbReference type="PANTHER" id="PTHR43268">
    <property type="entry name" value="THIOSULFATE SULFURTRANSFERASE/RHODANESE-LIKE DOMAIN-CONTAINING PROTEIN 2"/>
    <property type="match status" value="1"/>
</dbReference>
<dbReference type="Pfam" id="PF00581">
    <property type="entry name" value="Rhodanese"/>
    <property type="match status" value="1"/>
</dbReference>
<dbReference type="Pfam" id="PF12368">
    <property type="entry name" value="Rhodanese_C"/>
    <property type="match status" value="1"/>
</dbReference>
<dbReference type="Pfam" id="PF17773">
    <property type="entry name" value="UPF0176_N"/>
    <property type="match status" value="1"/>
</dbReference>
<dbReference type="SMART" id="SM00450">
    <property type="entry name" value="RHOD"/>
    <property type="match status" value="1"/>
</dbReference>
<dbReference type="SUPFAM" id="SSF52821">
    <property type="entry name" value="Rhodanese/Cell cycle control phosphatase"/>
    <property type="match status" value="1"/>
</dbReference>
<dbReference type="PROSITE" id="PS50206">
    <property type="entry name" value="RHODANESE_3"/>
    <property type="match status" value="1"/>
</dbReference>
<accession>C1EQF9</accession>
<comment type="function">
    <text evidence="1">Catalyzes oxygen-dependent 5-hydroxyuridine (ho5U) modification at position 34 in tRNAs.</text>
</comment>
<comment type="catalytic activity">
    <reaction evidence="1">
        <text>uridine(34) in tRNA + AH2 + O2 = 5-hydroxyuridine(34) in tRNA + A + H2O</text>
        <dbReference type="Rhea" id="RHEA:64224"/>
        <dbReference type="Rhea" id="RHEA-COMP:11727"/>
        <dbReference type="Rhea" id="RHEA-COMP:13381"/>
        <dbReference type="ChEBI" id="CHEBI:13193"/>
        <dbReference type="ChEBI" id="CHEBI:15377"/>
        <dbReference type="ChEBI" id="CHEBI:15379"/>
        <dbReference type="ChEBI" id="CHEBI:17499"/>
        <dbReference type="ChEBI" id="CHEBI:65315"/>
        <dbReference type="ChEBI" id="CHEBI:136877"/>
    </reaction>
</comment>
<comment type="similarity">
    <text evidence="1">Belongs to the TrhO family.</text>
</comment>
<reference key="1">
    <citation type="submission" date="2009-02" db="EMBL/GenBank/DDBJ databases">
        <title>Genome sequence of Bacillus cereus 03BB102.</title>
        <authorList>
            <person name="Dodson R.J."/>
            <person name="Jackson P."/>
            <person name="Munk A.C."/>
            <person name="Brettin T."/>
            <person name="Bruce D."/>
            <person name="Detter C."/>
            <person name="Tapia R."/>
            <person name="Han C."/>
            <person name="Sutton G."/>
            <person name="Sims D."/>
        </authorList>
    </citation>
    <scope>NUCLEOTIDE SEQUENCE [LARGE SCALE GENOMIC DNA]</scope>
    <source>
        <strain>03BB102</strain>
    </source>
</reference>
<organism>
    <name type="scientific">Bacillus cereus (strain 03BB102)</name>
    <dbReference type="NCBI Taxonomy" id="572264"/>
    <lineage>
        <taxon>Bacteria</taxon>
        <taxon>Bacillati</taxon>
        <taxon>Bacillota</taxon>
        <taxon>Bacilli</taxon>
        <taxon>Bacillales</taxon>
        <taxon>Bacillaceae</taxon>
        <taxon>Bacillus</taxon>
        <taxon>Bacillus cereus group</taxon>
    </lineage>
</organism>